<feature type="initiator methionine" description="Removed">
    <location>
        <position position="1"/>
    </location>
</feature>
<feature type="chain" id="PRO_0000172336" description="Large ribosomal subunit protein bL32">
    <location>
        <begin position="2"/>
        <end position="60"/>
    </location>
</feature>
<feature type="zinc finger region" description="C4-type" evidence="8">
    <location>
        <begin position="33"/>
        <end position="49"/>
    </location>
</feature>
<feature type="region of interest" description="Disordered" evidence="1">
    <location>
        <begin position="1"/>
        <end position="34"/>
    </location>
</feature>
<feature type="compositionally biased region" description="Basic residues" evidence="1">
    <location>
        <begin position="1"/>
        <end position="23"/>
    </location>
</feature>
<feature type="binding site" evidence="8">
    <location>
        <position position="33"/>
    </location>
    <ligand>
        <name>Zn(2+)</name>
        <dbReference type="ChEBI" id="CHEBI:29105"/>
    </ligand>
</feature>
<feature type="binding site" evidence="8">
    <location>
        <position position="36"/>
    </location>
    <ligand>
        <name>Zn(2+)</name>
        <dbReference type="ChEBI" id="CHEBI:29105"/>
    </ligand>
</feature>
<feature type="binding site" evidence="8">
    <location>
        <position position="46"/>
    </location>
    <ligand>
        <name>Zn(2+)</name>
        <dbReference type="ChEBI" id="CHEBI:29105"/>
    </ligand>
</feature>
<feature type="binding site" evidence="8">
    <location>
        <position position="49"/>
    </location>
    <ligand>
        <name>Zn(2+)</name>
        <dbReference type="ChEBI" id="CHEBI:29105"/>
    </ligand>
</feature>
<feature type="helix" evidence="10">
    <location>
        <begin position="13"/>
        <end position="19"/>
    </location>
</feature>
<feature type="turn" evidence="10">
    <location>
        <begin position="20"/>
        <end position="22"/>
    </location>
</feature>
<feature type="strand" evidence="9">
    <location>
        <begin position="30"/>
        <end position="32"/>
    </location>
</feature>
<feature type="strand" evidence="10">
    <location>
        <begin position="34"/>
        <end position="36"/>
    </location>
</feature>
<feature type="strand" evidence="10">
    <location>
        <begin position="38"/>
        <end position="40"/>
    </location>
</feature>
<feature type="turn" evidence="10">
    <location>
        <begin position="47"/>
        <end position="49"/>
    </location>
</feature>
<feature type="strand" evidence="10">
    <location>
        <begin position="51"/>
        <end position="55"/>
    </location>
</feature>
<gene>
    <name type="primary">rpmF</name>
    <name type="ordered locus">DR_2366</name>
</gene>
<accession>P49228</accession>
<organism>
    <name type="scientific">Deinococcus radiodurans (strain ATCC 13939 / DSM 20539 / JCM 16871 / CCUG 27074 / LMG 4051 / NBRC 15346 / NCIMB 9279 / VKM B-1422 / R1)</name>
    <dbReference type="NCBI Taxonomy" id="243230"/>
    <lineage>
        <taxon>Bacteria</taxon>
        <taxon>Thermotogati</taxon>
        <taxon>Deinococcota</taxon>
        <taxon>Deinococci</taxon>
        <taxon>Deinococcales</taxon>
        <taxon>Deinococcaceae</taxon>
        <taxon>Deinococcus</taxon>
    </lineage>
</organism>
<sequence length="60" mass="6792">MAKHPVPKKKTSKSKRDMRRSHHALTAPNLTECPQCHGKKLSHHICPNCGYYDGRQVLAV</sequence>
<comment type="function">
    <text>Forms a cluster with L17 and L22, and with L22, a pair of 'tweezers' that hold together all the domains of the 23S rRNA. Interacts with the antibiotic troleandomycin which blocks the peptide exit tunnel.</text>
</comment>
<comment type="cofactor">
    <cofactor evidence="8">
        <name>Zn(2+)</name>
        <dbReference type="ChEBI" id="CHEBI:29105"/>
    </cofactor>
    <text evidence="8">Binds 1 zinc ion per subunit.</text>
</comment>
<comment type="subunit">
    <text evidence="2 3 4 5 6 7">Part of the 50S ribosomal subunit. Contacts proteins L17 and L22.</text>
</comment>
<comment type="similarity">
    <text evidence="8">Belongs to the bacterial ribosomal protein bL32 family.</text>
</comment>
<evidence type="ECO:0000256" key="1">
    <source>
        <dbReference type="SAM" id="MobiDB-lite"/>
    </source>
</evidence>
<evidence type="ECO:0000269" key="2">
    <source>
    </source>
</evidence>
<evidence type="ECO:0000269" key="3">
    <source>
    </source>
</evidence>
<evidence type="ECO:0000269" key="4">
    <source>
    </source>
</evidence>
<evidence type="ECO:0000269" key="5">
    <source>
    </source>
</evidence>
<evidence type="ECO:0000269" key="6">
    <source>
    </source>
</evidence>
<evidence type="ECO:0000269" key="7">
    <source>
    </source>
</evidence>
<evidence type="ECO:0000305" key="8"/>
<evidence type="ECO:0007829" key="9">
    <source>
        <dbReference type="PDB" id="4IO9"/>
    </source>
</evidence>
<evidence type="ECO:0007829" key="10">
    <source>
        <dbReference type="PDB" id="5DM6"/>
    </source>
</evidence>
<protein>
    <recommendedName>
        <fullName evidence="8">Large ribosomal subunit protein bL32</fullName>
    </recommendedName>
    <alternativeName>
        <fullName>50S ribosomal protein L32</fullName>
    </alternativeName>
</protein>
<dbReference type="EMBL" id="D63900">
    <property type="protein sequence ID" value="BAA09939.1"/>
    <property type="molecule type" value="Genomic_DNA"/>
</dbReference>
<dbReference type="EMBL" id="AE000513">
    <property type="protein sequence ID" value="AAF11913.1"/>
    <property type="molecule type" value="Genomic_DNA"/>
</dbReference>
<dbReference type="PIR" id="F75282">
    <property type="entry name" value="F75282"/>
</dbReference>
<dbReference type="RefSeq" id="NP_296087.1">
    <property type="nucleotide sequence ID" value="NC_001263.1"/>
</dbReference>
<dbReference type="RefSeq" id="WP_010888992.1">
    <property type="nucleotide sequence ID" value="NC_001263.1"/>
</dbReference>
<dbReference type="PDB" id="1J5A">
    <property type="method" value="X-ray"/>
    <property type="resolution" value="3.50 A"/>
    <property type="chains" value="M=1-60"/>
</dbReference>
<dbReference type="PDB" id="1JZX">
    <property type="method" value="X-ray"/>
    <property type="resolution" value="3.10 A"/>
    <property type="chains" value="M=1-60"/>
</dbReference>
<dbReference type="PDB" id="1JZY">
    <property type="method" value="X-ray"/>
    <property type="resolution" value="3.50 A"/>
    <property type="chains" value="M=1-60"/>
</dbReference>
<dbReference type="PDB" id="1JZZ">
    <property type="method" value="X-ray"/>
    <property type="resolution" value="3.80 A"/>
    <property type="chains" value="M=1-60"/>
</dbReference>
<dbReference type="PDB" id="1K01">
    <property type="method" value="X-ray"/>
    <property type="resolution" value="3.50 A"/>
    <property type="chains" value="M=1-60"/>
</dbReference>
<dbReference type="PDB" id="1NKW">
    <property type="method" value="X-ray"/>
    <property type="resolution" value="3.10 A"/>
    <property type="chains" value="Z=1-60"/>
</dbReference>
<dbReference type="PDB" id="1NWX">
    <property type="method" value="X-ray"/>
    <property type="resolution" value="3.50 A"/>
    <property type="chains" value="Z=2-60"/>
</dbReference>
<dbReference type="PDB" id="1NWY">
    <property type="method" value="X-ray"/>
    <property type="resolution" value="3.30 A"/>
    <property type="chains" value="Z=2-60"/>
</dbReference>
<dbReference type="PDB" id="1OND">
    <property type="method" value="X-ray"/>
    <property type="resolution" value="3.40 A"/>
    <property type="chains" value="Z=1-60"/>
</dbReference>
<dbReference type="PDB" id="1SM1">
    <property type="method" value="X-ray"/>
    <property type="resolution" value="3.42 A"/>
    <property type="chains" value="Z=1-60"/>
</dbReference>
<dbReference type="PDB" id="1XBP">
    <property type="method" value="X-ray"/>
    <property type="resolution" value="3.50 A"/>
    <property type="chains" value="Z=2-60"/>
</dbReference>
<dbReference type="PDB" id="2ZJP">
    <property type="method" value="X-ray"/>
    <property type="resolution" value="3.70 A"/>
    <property type="chains" value="Y=1-60"/>
</dbReference>
<dbReference type="PDB" id="2ZJQ">
    <property type="method" value="X-ray"/>
    <property type="resolution" value="3.30 A"/>
    <property type="chains" value="Z=1-60"/>
</dbReference>
<dbReference type="PDB" id="2ZJR">
    <property type="method" value="X-ray"/>
    <property type="resolution" value="2.91 A"/>
    <property type="chains" value="Z=1-60"/>
</dbReference>
<dbReference type="PDB" id="3CF5">
    <property type="method" value="X-ray"/>
    <property type="resolution" value="3.30 A"/>
    <property type="chains" value="Y=1-60"/>
</dbReference>
<dbReference type="PDB" id="3DLL">
    <property type="method" value="X-ray"/>
    <property type="resolution" value="3.50 A"/>
    <property type="chains" value="Y=1-60"/>
</dbReference>
<dbReference type="PDB" id="3PIO">
    <property type="method" value="X-ray"/>
    <property type="resolution" value="3.25 A"/>
    <property type="chains" value="Z=1-60"/>
</dbReference>
<dbReference type="PDB" id="3PIP">
    <property type="method" value="X-ray"/>
    <property type="resolution" value="3.45 A"/>
    <property type="chains" value="Z=1-60"/>
</dbReference>
<dbReference type="PDB" id="4IO9">
    <property type="method" value="X-ray"/>
    <property type="resolution" value="3.20 A"/>
    <property type="chains" value="Z=1-60"/>
</dbReference>
<dbReference type="PDB" id="4IOA">
    <property type="method" value="X-ray"/>
    <property type="resolution" value="3.20 A"/>
    <property type="chains" value="Z=1-60"/>
</dbReference>
<dbReference type="PDB" id="4IOC">
    <property type="method" value="X-ray"/>
    <property type="resolution" value="3.60 A"/>
    <property type="chains" value="Z=1-60"/>
</dbReference>
<dbReference type="PDB" id="4U67">
    <property type="method" value="X-ray"/>
    <property type="resolution" value="3.65 A"/>
    <property type="chains" value="Z=1-60"/>
</dbReference>
<dbReference type="PDB" id="4V49">
    <property type="method" value="X-ray"/>
    <property type="resolution" value="8.70 A"/>
    <property type="chains" value="Z=2-59"/>
</dbReference>
<dbReference type="PDB" id="4V4A">
    <property type="method" value="X-ray"/>
    <property type="resolution" value="9.50 A"/>
    <property type="chains" value="Z=2-59"/>
</dbReference>
<dbReference type="PDB" id="4V4G">
    <property type="method" value="X-ray"/>
    <property type="resolution" value="11.50 A"/>
    <property type="chains" value="2=2-59"/>
</dbReference>
<dbReference type="PDB" id="4V4R">
    <property type="method" value="X-ray"/>
    <property type="resolution" value="5.90 A"/>
    <property type="chains" value="B5=1-60"/>
</dbReference>
<dbReference type="PDB" id="4V4S">
    <property type="method" value="X-ray"/>
    <property type="resolution" value="6.76 A"/>
    <property type="chains" value="B5=1-60"/>
</dbReference>
<dbReference type="PDB" id="4V4T">
    <property type="method" value="X-ray"/>
    <property type="resolution" value="6.46 A"/>
    <property type="chains" value="5=1-60"/>
</dbReference>
<dbReference type="PDB" id="4WFN">
    <property type="method" value="X-ray"/>
    <property type="resolution" value="3.54 A"/>
    <property type="chains" value="Z=1-60"/>
</dbReference>
<dbReference type="PDB" id="5DM6">
    <property type="method" value="X-ray"/>
    <property type="resolution" value="2.90 A"/>
    <property type="chains" value="Z=3-59"/>
</dbReference>
<dbReference type="PDB" id="5DM7">
    <property type="method" value="X-ray"/>
    <property type="resolution" value="3.00 A"/>
    <property type="chains" value="Z=3-59"/>
</dbReference>
<dbReference type="PDB" id="5JVG">
    <property type="method" value="X-ray"/>
    <property type="resolution" value="3.43 A"/>
    <property type="chains" value="Z=1-60"/>
</dbReference>
<dbReference type="PDB" id="5JVH">
    <property type="method" value="X-ray"/>
    <property type="resolution" value="3.58 A"/>
    <property type="chains" value="Z=1-60"/>
</dbReference>
<dbReference type="PDB" id="7A0R">
    <property type="method" value="X-ray"/>
    <property type="resolution" value="3.30 A"/>
    <property type="chains" value="Z=2-59"/>
</dbReference>
<dbReference type="PDB" id="7A0S">
    <property type="method" value="X-ray"/>
    <property type="resolution" value="3.22 A"/>
    <property type="chains" value="Z=2-59"/>
</dbReference>
<dbReference type="PDB" id="7A18">
    <property type="method" value="X-ray"/>
    <property type="resolution" value="3.40 A"/>
    <property type="chains" value="Z=3-59"/>
</dbReference>
<dbReference type="PDBsum" id="1J5A"/>
<dbReference type="PDBsum" id="1JZX"/>
<dbReference type="PDBsum" id="1JZY"/>
<dbReference type="PDBsum" id="1JZZ"/>
<dbReference type="PDBsum" id="1K01"/>
<dbReference type="PDBsum" id="1NKW"/>
<dbReference type="PDBsum" id="1NWX"/>
<dbReference type="PDBsum" id="1NWY"/>
<dbReference type="PDBsum" id="1OND"/>
<dbReference type="PDBsum" id="1SM1"/>
<dbReference type="PDBsum" id="1XBP"/>
<dbReference type="PDBsum" id="2ZJP"/>
<dbReference type="PDBsum" id="2ZJQ"/>
<dbReference type="PDBsum" id="2ZJR"/>
<dbReference type="PDBsum" id="3CF5"/>
<dbReference type="PDBsum" id="3DLL"/>
<dbReference type="PDBsum" id="3PIO"/>
<dbReference type="PDBsum" id="3PIP"/>
<dbReference type="PDBsum" id="4IO9"/>
<dbReference type="PDBsum" id="4IOA"/>
<dbReference type="PDBsum" id="4IOC"/>
<dbReference type="PDBsum" id="4U67"/>
<dbReference type="PDBsum" id="4V49"/>
<dbReference type="PDBsum" id="4V4A"/>
<dbReference type="PDBsum" id="4V4G"/>
<dbReference type="PDBsum" id="4V4R"/>
<dbReference type="PDBsum" id="4V4S"/>
<dbReference type="PDBsum" id="4V4T"/>
<dbReference type="PDBsum" id="4WFN"/>
<dbReference type="PDBsum" id="5DM6"/>
<dbReference type="PDBsum" id="5DM7"/>
<dbReference type="PDBsum" id="5JVG"/>
<dbReference type="PDBsum" id="5JVH"/>
<dbReference type="PDBsum" id="7A0R"/>
<dbReference type="PDBsum" id="7A0S"/>
<dbReference type="PDBsum" id="7A18"/>
<dbReference type="SMR" id="P49228"/>
<dbReference type="FunCoup" id="P49228">
    <property type="interactions" value="159"/>
</dbReference>
<dbReference type="IntAct" id="P49228">
    <property type="interactions" value="1"/>
</dbReference>
<dbReference type="STRING" id="243230.DR_2366"/>
<dbReference type="DrugBank" id="DB13179">
    <property type="generic name" value="Troleandomycin"/>
</dbReference>
<dbReference type="PaxDb" id="243230-DR_2366"/>
<dbReference type="EnsemblBacteria" id="AAF11913">
    <property type="protein sequence ID" value="AAF11913"/>
    <property type="gene ID" value="DR_2366"/>
</dbReference>
<dbReference type="GeneID" id="69518616"/>
<dbReference type="KEGG" id="dra:DR_2366"/>
<dbReference type="PATRIC" id="fig|243230.17.peg.2600"/>
<dbReference type="eggNOG" id="COG0333">
    <property type="taxonomic scope" value="Bacteria"/>
</dbReference>
<dbReference type="HOGENOM" id="CLU_129084_1_3_0"/>
<dbReference type="InParanoid" id="P49228"/>
<dbReference type="OrthoDB" id="9812874at2"/>
<dbReference type="EvolutionaryTrace" id="P49228"/>
<dbReference type="Proteomes" id="UP000002524">
    <property type="component" value="Chromosome 1"/>
</dbReference>
<dbReference type="GO" id="GO:0015934">
    <property type="term" value="C:large ribosomal subunit"/>
    <property type="evidence" value="ECO:0007669"/>
    <property type="project" value="InterPro"/>
</dbReference>
<dbReference type="GO" id="GO:0019843">
    <property type="term" value="F:rRNA binding"/>
    <property type="evidence" value="ECO:0007669"/>
    <property type="project" value="UniProtKB-KW"/>
</dbReference>
<dbReference type="GO" id="GO:0003735">
    <property type="term" value="F:structural constituent of ribosome"/>
    <property type="evidence" value="ECO:0000318"/>
    <property type="project" value="GO_Central"/>
</dbReference>
<dbReference type="GO" id="GO:0008270">
    <property type="term" value="F:zinc ion binding"/>
    <property type="evidence" value="ECO:0007669"/>
    <property type="project" value="UniProtKB-KW"/>
</dbReference>
<dbReference type="GO" id="GO:0006412">
    <property type="term" value="P:translation"/>
    <property type="evidence" value="ECO:0007669"/>
    <property type="project" value="UniProtKB-UniRule"/>
</dbReference>
<dbReference type="Gene3D" id="1.20.5.640">
    <property type="entry name" value="Single helix bin"/>
    <property type="match status" value="1"/>
</dbReference>
<dbReference type="HAMAP" id="MF_00340">
    <property type="entry name" value="Ribosomal_bL32"/>
    <property type="match status" value="1"/>
</dbReference>
<dbReference type="InterPro" id="IPR002677">
    <property type="entry name" value="Ribosomal_bL32"/>
</dbReference>
<dbReference type="InterPro" id="IPR044957">
    <property type="entry name" value="Ribosomal_bL32_bact"/>
</dbReference>
<dbReference type="InterPro" id="IPR011332">
    <property type="entry name" value="Ribosomal_zn-bd"/>
</dbReference>
<dbReference type="NCBIfam" id="TIGR01031">
    <property type="entry name" value="rpmF_bact"/>
    <property type="match status" value="1"/>
</dbReference>
<dbReference type="PANTHER" id="PTHR35534">
    <property type="entry name" value="50S RIBOSOMAL PROTEIN L32"/>
    <property type="match status" value="1"/>
</dbReference>
<dbReference type="PANTHER" id="PTHR35534:SF1">
    <property type="entry name" value="LARGE RIBOSOMAL SUBUNIT PROTEIN BL32"/>
    <property type="match status" value="1"/>
</dbReference>
<dbReference type="Pfam" id="PF01783">
    <property type="entry name" value="Ribosomal_L32p"/>
    <property type="match status" value="1"/>
</dbReference>
<dbReference type="SUPFAM" id="SSF57829">
    <property type="entry name" value="Zn-binding ribosomal proteins"/>
    <property type="match status" value="1"/>
</dbReference>
<keyword id="KW-0002">3D-structure</keyword>
<keyword id="KW-0903">Direct protein sequencing</keyword>
<keyword id="KW-0479">Metal-binding</keyword>
<keyword id="KW-1185">Reference proteome</keyword>
<keyword id="KW-0687">Ribonucleoprotein</keyword>
<keyword id="KW-0689">Ribosomal protein</keyword>
<keyword id="KW-0694">RNA-binding</keyword>
<keyword id="KW-0699">rRNA-binding</keyword>
<keyword id="KW-0862">Zinc</keyword>
<keyword id="KW-0863">Zinc-finger</keyword>
<name>RL32_DEIRA</name>
<reference key="1">
    <citation type="submission" date="1995-08" db="EMBL/GenBank/DDBJ databases">
        <title>Identification of the rpmF gene encoding ribosomal protein L32 from Deinococcus radiodurans.</title>
        <authorList>
            <person name="Narumi I."/>
            <person name="Watanabe H."/>
        </authorList>
    </citation>
    <scope>NUCLEOTIDE SEQUENCE [GENOMIC DNA]</scope>
    <source>
        <strain>KR1</strain>
    </source>
</reference>
<reference key="2">
    <citation type="journal article" date="1999" name="Science">
        <title>Genome sequence of the radioresistant bacterium Deinococcus radiodurans R1.</title>
        <authorList>
            <person name="White O."/>
            <person name="Eisen J.A."/>
            <person name="Heidelberg J.F."/>
            <person name="Hickey E.K."/>
            <person name="Peterson J.D."/>
            <person name="Dodson R.J."/>
            <person name="Haft D.H."/>
            <person name="Gwinn M.L."/>
            <person name="Nelson W.C."/>
            <person name="Richardson D.L."/>
            <person name="Moffat K.S."/>
            <person name="Qin H."/>
            <person name="Jiang L."/>
            <person name="Pamphile W."/>
            <person name="Crosby M."/>
            <person name="Shen M."/>
            <person name="Vamathevan J.J."/>
            <person name="Lam P."/>
            <person name="McDonald L.A."/>
            <person name="Utterback T.R."/>
            <person name="Zalewski C."/>
            <person name="Makarova K.S."/>
            <person name="Aravind L."/>
            <person name="Daly M.J."/>
            <person name="Minton K.W."/>
            <person name="Fleischmann R.D."/>
            <person name="Ketchum K.A."/>
            <person name="Nelson K.E."/>
            <person name="Salzberg S.L."/>
            <person name="Smith H.O."/>
            <person name="Venter J.C."/>
            <person name="Fraser C.M."/>
        </authorList>
    </citation>
    <scope>NUCLEOTIDE SEQUENCE [LARGE SCALE GENOMIC DNA]</scope>
    <source>
        <strain>ATCC 13939 / DSM 20539 / JCM 16871 / CCUG 27074 / LMG 4051 / NBRC 15346 / NCIMB 9279 / VKM B-1422 / R1</strain>
    </source>
</reference>
<reference key="3">
    <citation type="journal article" date="2001" name="Cell">
        <title>High resolution structure of the large ribosomal subunit from a mesophilic eubacterium.</title>
        <authorList>
            <person name="Harms J."/>
            <person name="Schluenzen F."/>
            <person name="Zarivach R."/>
            <person name="Bashan A."/>
            <person name="Gat S."/>
            <person name="Agmon I."/>
            <person name="Bartels H."/>
            <person name="Franceschi F."/>
            <person name="Yonath A."/>
        </authorList>
    </citation>
    <scope>X-RAY CRYSTALLOGRAPHY (3.1 ANGSTROMS) OF THE 50S SUBUNIT</scope>
    <scope>PROTEIN SEQUENCE OF 1-6</scope>
    <source>
        <strain>ATCC 13939 / DSM 20539 / JCM 16871 / CCUG 27074 / LMG 4051 / NBRC 15346 / NCIMB 9279 / VKM B-1422 / R1</strain>
    </source>
</reference>
<reference key="4">
    <citation type="journal article" date="2001" name="Nature">
        <title>Structural basis for the interaction of antibiotics with the peptidyl transferase centre in eubacteria.</title>
        <authorList>
            <person name="Schluenzen F."/>
            <person name="Zarivach R."/>
            <person name="Harms J."/>
            <person name="Bashan A."/>
            <person name="Tocilj A."/>
            <person name="Albrecht R."/>
            <person name="Yonath A."/>
            <person name="Franceschi F."/>
        </authorList>
    </citation>
    <scope>X-RAY CRYSTALLOGRAPHY (3.1 ANGSTROMS) OF THE 50S SUBUNIT IN COMPLEX WITH FIVE ANTIBIOTICS</scope>
    <source>
        <strain>ATCC 13939 / DSM 20539 / JCM 16871 / CCUG 27074 / LMG 4051 / NBRC 15346 / NCIMB 9279 / VKM B-1422 / R1</strain>
    </source>
</reference>
<reference key="5">
    <citation type="journal article" date="2003" name="Mol. Cell">
        <title>Structural basis of the ribosomal machinery for peptide bond formation, translocation, and nascent chain progression.</title>
        <authorList>
            <person name="Bashan A."/>
            <person name="Agmon I."/>
            <person name="Zarivach R."/>
            <person name="Schluenzen F."/>
            <person name="Harms J."/>
            <person name="Berisio R."/>
            <person name="Bartels H."/>
            <person name="Franceschi F."/>
            <person name="Auerbach T."/>
            <person name="Hansen H.A."/>
            <person name="Kossoy E."/>
            <person name="Kessler M."/>
            <person name="Yonath A."/>
        </authorList>
    </citation>
    <scope>X-RAY CRYSTALLOGRAPHY (3.5 ANGSTROMS) OF THE 50S SUBUNIT IN COMPLEX WITH TRNA MIMICS</scope>
    <source>
        <strain>ATCC 13939 / DSM 20539 / JCM 16871 / CCUG 27074 / LMG 4051 / NBRC 15346 / NCIMB 9279 / VKM B-1422 / R1</strain>
    </source>
</reference>
<reference key="6">
    <citation type="journal article" date="2003" name="Structure">
        <title>Structural basis for the antibiotic activity of ketolides and azalides.</title>
        <authorList>
            <person name="Schluenzen F."/>
            <person name="Harms J.M."/>
            <person name="Franceschi F."/>
            <person name="Hansen H.A."/>
            <person name="Bartels H."/>
            <person name="Zarivach R."/>
            <person name="Yonath A."/>
        </authorList>
    </citation>
    <scope>X-RAY CRYSTALLOGRAPHY (3.3 ANGSTROMS) OF THE 50S SUBUNIT IN COMPLEX WITH MODIFIED MACROLIDE ANTIBIOTICS</scope>
    <source>
        <strain>ATCC 13939 / DSM 20539 / JCM 16871 / CCUG 27074 / LMG 4051 / NBRC 15346 / NCIMB 9279 / VKM B-1422 / R1</strain>
    </source>
</reference>
<reference key="7">
    <citation type="journal article" date="2003" name="Nat. Struct. Biol.">
        <title>Structural insight into the role of the ribosomal tunnel in cellular regulation.</title>
        <authorList>
            <person name="Berisio R."/>
            <person name="Schluenzen F."/>
            <person name="Harms J."/>
            <person name="Bashan A."/>
            <person name="Auerbach T."/>
            <person name="Baram D."/>
            <person name="Yonath A."/>
        </authorList>
    </citation>
    <scope>X-RAY CRYSTALLOGRAPHY (3.4 ANGSTROMS) OF THE 50S SUBUNIT IN COMPLEX WITH TROLEANDOMYCIN</scope>
    <source>
        <strain>ATCC 13939 / DSM 20539 / JCM 16871 / CCUG 27074 / LMG 4051 / NBRC 15346 / NCIMB 9279 / VKM B-1422 / R1</strain>
    </source>
</reference>
<reference key="8">
    <citation type="journal article" date="2004" name="BMC Biol.">
        <title>Alterations at the peptidyl transferase centre of the ribosome induced by the synergistic action of the streptogramins dalfopristin and quinupristin.</title>
        <authorList>
            <person name="Harms J.M."/>
            <person name="Schluenzen F."/>
            <person name="Fucini P."/>
            <person name="Bartels H."/>
            <person name="Yonath A."/>
        </authorList>
    </citation>
    <scope>X-RAY CRYSTALLOGRAPHY (3.4 ANGSTROMS) OF THE 50S SUBUNIT IN COMPLEX WITH THE STREPTOGRAMINS QUINUPRISTIN AND DALFOPRISTIN</scope>
    <source>
        <strain>ATCC 13939 / DSM 20539 / JCM 16871 / CCUG 27074 / LMG 4051 / NBRC 15346 / NCIMB 9279 / VKM B-1422 / R1</strain>
    </source>
</reference>
<reference key="9">
    <citation type="journal article" date="2004" name="Mol. Microbiol.">
        <title>Inhibition of peptide bond formation by pleuromutilins: the structure of the 50S ribosomal subunit from Deinococcus radiodurans in complex with tiamulin.</title>
        <authorList>
            <person name="Schluenzen F."/>
            <person name="Pyetan E."/>
            <person name="Fucini P."/>
            <person name="Yonath A."/>
            <person name="Harms J.M."/>
        </authorList>
    </citation>
    <scope>X-RAY CRYSTALLOGRAPHY (3.5 ANGSTROMS) OF THE 50S SUBUNIT IN COMPLEX WITH TIAMULIN</scope>
    <source>
        <strain>ATCC 13939 / DSM 20539 / JCM 16871 / CCUG 27074 / LMG 4051 / NBRC 15346 / NCIMB 9279 / VKM B-1422 / R1</strain>
    </source>
</reference>
<proteinExistence type="evidence at protein level"/>